<dbReference type="EMBL" id="CP000240">
    <property type="protein sequence ID" value="ABD02461.1"/>
    <property type="molecule type" value="Genomic_DNA"/>
</dbReference>
<dbReference type="RefSeq" id="WP_011433109.1">
    <property type="nucleotide sequence ID" value="NC_007776.1"/>
</dbReference>
<dbReference type="SMR" id="Q2JLF0"/>
<dbReference type="STRING" id="321332.CYB_1495"/>
<dbReference type="KEGG" id="cyb:CYB_1495"/>
<dbReference type="eggNOG" id="ENOG5032RR6">
    <property type="taxonomic scope" value="Bacteria"/>
</dbReference>
<dbReference type="HOGENOM" id="CLU_194095_0_0_3"/>
<dbReference type="OrthoDB" id="514620at2"/>
<dbReference type="Proteomes" id="UP000001938">
    <property type="component" value="Chromosome"/>
</dbReference>
<dbReference type="GO" id="GO:0009539">
    <property type="term" value="C:photosystem II reaction center"/>
    <property type="evidence" value="ECO:0007669"/>
    <property type="project" value="InterPro"/>
</dbReference>
<dbReference type="GO" id="GO:0031676">
    <property type="term" value="C:plasma membrane-derived thylakoid membrane"/>
    <property type="evidence" value="ECO:0007669"/>
    <property type="project" value="UniProtKB-SubCell"/>
</dbReference>
<dbReference type="GO" id="GO:0009055">
    <property type="term" value="F:electron transfer activity"/>
    <property type="evidence" value="ECO:0007669"/>
    <property type="project" value="UniProtKB-UniRule"/>
</dbReference>
<dbReference type="GO" id="GO:0020037">
    <property type="term" value="F:heme binding"/>
    <property type="evidence" value="ECO:0007669"/>
    <property type="project" value="InterPro"/>
</dbReference>
<dbReference type="GO" id="GO:0005506">
    <property type="term" value="F:iron ion binding"/>
    <property type="evidence" value="ECO:0007669"/>
    <property type="project" value="UniProtKB-UniRule"/>
</dbReference>
<dbReference type="GO" id="GO:0009767">
    <property type="term" value="P:photosynthetic electron transport chain"/>
    <property type="evidence" value="ECO:0007669"/>
    <property type="project" value="InterPro"/>
</dbReference>
<dbReference type="Gene3D" id="1.20.5.860">
    <property type="entry name" value="Photosystem II cytochrome b559, alpha subunit"/>
    <property type="match status" value="1"/>
</dbReference>
<dbReference type="HAMAP" id="MF_00642">
    <property type="entry name" value="PSII_PsbE"/>
    <property type="match status" value="1"/>
</dbReference>
<dbReference type="InterPro" id="IPR006217">
    <property type="entry name" value="PSII_cyt_b559_asu"/>
</dbReference>
<dbReference type="InterPro" id="IPR037025">
    <property type="entry name" value="PSII_cyt_b559_asu_sf"/>
</dbReference>
<dbReference type="InterPro" id="IPR006216">
    <property type="entry name" value="PSII_cyt_b559_CS"/>
</dbReference>
<dbReference type="InterPro" id="IPR013081">
    <property type="entry name" value="PSII_cyt_b559_N"/>
</dbReference>
<dbReference type="InterPro" id="IPR013082">
    <property type="entry name" value="PSII_cytb559_asu_lum"/>
</dbReference>
<dbReference type="NCBIfam" id="TIGR01332">
    <property type="entry name" value="cyt_b559_alpha"/>
    <property type="match status" value="1"/>
</dbReference>
<dbReference type="PANTHER" id="PTHR33391">
    <property type="entry name" value="CYTOCHROME B559 SUBUNIT BETA-RELATED"/>
    <property type="match status" value="1"/>
</dbReference>
<dbReference type="PANTHER" id="PTHR33391:SF9">
    <property type="entry name" value="CYTOCHROME B559 SUBUNIT BETA-RELATED"/>
    <property type="match status" value="1"/>
</dbReference>
<dbReference type="Pfam" id="PF00283">
    <property type="entry name" value="Cytochrom_B559"/>
    <property type="match status" value="1"/>
</dbReference>
<dbReference type="Pfam" id="PF00284">
    <property type="entry name" value="Cytochrom_B559a"/>
    <property type="match status" value="1"/>
</dbReference>
<dbReference type="PIRSF" id="PIRSF000036">
    <property type="entry name" value="PsbE"/>
    <property type="match status" value="1"/>
</dbReference>
<dbReference type="SUPFAM" id="SSF161045">
    <property type="entry name" value="Cytochrome b559 subunits"/>
    <property type="match status" value="1"/>
</dbReference>
<dbReference type="PROSITE" id="PS00537">
    <property type="entry name" value="CYTOCHROME_B559"/>
    <property type="match status" value="1"/>
</dbReference>
<reference key="1">
    <citation type="journal article" date="2007" name="ISME J.">
        <title>Population level functional diversity in a microbial community revealed by comparative genomic and metagenomic analyses.</title>
        <authorList>
            <person name="Bhaya D."/>
            <person name="Grossman A.R."/>
            <person name="Steunou A.-S."/>
            <person name="Khuri N."/>
            <person name="Cohan F.M."/>
            <person name="Hamamura N."/>
            <person name="Melendrez M.C."/>
            <person name="Bateson M.M."/>
            <person name="Ward D.M."/>
            <person name="Heidelberg J.F."/>
        </authorList>
    </citation>
    <scope>NUCLEOTIDE SEQUENCE [LARGE SCALE GENOMIC DNA]</scope>
    <source>
        <strain>JA-2-3B'a(2-13)</strain>
    </source>
</reference>
<keyword id="KW-0249">Electron transport</keyword>
<keyword id="KW-0349">Heme</keyword>
<keyword id="KW-0408">Iron</keyword>
<keyword id="KW-0472">Membrane</keyword>
<keyword id="KW-0479">Metal-binding</keyword>
<keyword id="KW-0602">Photosynthesis</keyword>
<keyword id="KW-0604">Photosystem II</keyword>
<keyword id="KW-1185">Reference proteome</keyword>
<keyword id="KW-0793">Thylakoid</keyword>
<keyword id="KW-0812">Transmembrane</keyword>
<keyword id="KW-1133">Transmembrane helix</keyword>
<keyword id="KW-0813">Transport</keyword>
<organism>
    <name type="scientific">Synechococcus sp. (strain JA-2-3B'a(2-13))</name>
    <name type="common">Cyanobacteria bacterium Yellowstone B-Prime</name>
    <dbReference type="NCBI Taxonomy" id="321332"/>
    <lineage>
        <taxon>Bacteria</taxon>
        <taxon>Bacillati</taxon>
        <taxon>Cyanobacteriota</taxon>
        <taxon>Cyanophyceae</taxon>
        <taxon>Synechococcales</taxon>
        <taxon>Synechococcaceae</taxon>
        <taxon>Synechococcus</taxon>
    </lineage>
</organism>
<protein>
    <recommendedName>
        <fullName evidence="1">Cytochrome b559 subunit alpha</fullName>
    </recommendedName>
    <alternativeName>
        <fullName evidence="1">PSII reaction center subunit V</fullName>
    </alternativeName>
</protein>
<feature type="chain" id="PRO_0000233222" description="Cytochrome b559 subunit alpha">
    <location>
        <begin position="1"/>
        <end position="81"/>
    </location>
</feature>
<feature type="transmembrane region" description="Helical" evidence="1">
    <location>
        <begin position="21"/>
        <end position="35"/>
    </location>
</feature>
<feature type="binding site" description="axial binding residue" evidence="1">
    <location>
        <position position="23"/>
    </location>
    <ligand>
        <name>heme</name>
        <dbReference type="ChEBI" id="CHEBI:30413"/>
        <note>ligand shared with beta subunit</note>
    </ligand>
    <ligandPart>
        <name>Fe</name>
        <dbReference type="ChEBI" id="CHEBI:18248"/>
    </ligandPart>
</feature>
<accession>Q2JLF0</accession>
<comment type="function">
    <text evidence="1">This b-type cytochrome is tightly associated with the reaction center of photosystem II (PSII). PSII is a light-driven water:plastoquinone oxidoreductase that uses light energy to abstract electrons from H(2)O, generating O(2) and a proton gradient subsequently used for ATP formation. It consists of a core antenna complex that captures photons, and an electron transfer chain that converts photonic excitation into a charge separation.</text>
</comment>
<comment type="cofactor">
    <cofactor evidence="1">
        <name>heme b</name>
        <dbReference type="ChEBI" id="CHEBI:60344"/>
    </cofactor>
    <text evidence="1">With its partner (PsbF) binds heme. PSII binds additional chlorophylls, carotenoids and specific lipids.</text>
</comment>
<comment type="subunit">
    <text evidence="1">Heterodimer of an alpha subunit and a beta subunit. PSII is composed of 1 copy each of membrane proteins PsbA, PsbB, PsbC, PsbD, PsbE, PsbF, PsbH, PsbI, PsbJ, PsbK, PsbL, PsbM, PsbT, PsbX, PsbY, PsbZ, Psb30/Ycf12, peripheral proteins PsbO, CyanoQ (PsbQ), PsbU, PsbV and a large number of cofactors. It forms dimeric complexes.</text>
</comment>
<comment type="subcellular location">
    <subcellularLocation>
        <location evidence="1">Cellular thylakoid membrane</location>
        <topology evidence="1">Single-pass membrane protein</topology>
    </subcellularLocation>
</comment>
<comment type="similarity">
    <text evidence="1">Belongs to the PsbE/PsbF family.</text>
</comment>
<proteinExistence type="inferred from homology"/>
<sequence>MAGSTGERPFVDIITSVRYWVIHALTIPALFLAGWLFVSTGLAYDIFGTPRPNEYFTAERQELPIVSDRFNALEELERLTR</sequence>
<name>PSBE_SYNJB</name>
<evidence type="ECO:0000255" key="1">
    <source>
        <dbReference type="HAMAP-Rule" id="MF_00642"/>
    </source>
</evidence>
<gene>
    <name evidence="1" type="primary">psbE</name>
    <name type="ordered locus">CYB_1495</name>
</gene>